<organism>
    <name type="scientific">Hydrogenovibrio crunogenus (strain DSM 25203 / XCL-2)</name>
    <name type="common">Thiomicrospira crunogena</name>
    <dbReference type="NCBI Taxonomy" id="317025"/>
    <lineage>
        <taxon>Bacteria</taxon>
        <taxon>Pseudomonadati</taxon>
        <taxon>Pseudomonadota</taxon>
        <taxon>Gammaproteobacteria</taxon>
        <taxon>Thiotrichales</taxon>
        <taxon>Piscirickettsiaceae</taxon>
        <taxon>Hydrogenovibrio</taxon>
    </lineage>
</organism>
<sequence>MSITAVYPGTFDPITCGHFDLIERAARFYDRLVIAVADNRNKTALFSLEKRVALAKEVTADMPNVEVIGFSGLLVDFVREIDGNVLLRGLRAVSDFEYEFQLASMNRKLAPEVETMFMTPAEQYAFISSSLVREISALGGDVSEFVHPVVAKALNEKQL</sequence>
<comment type="function">
    <text evidence="1">Reversibly transfers an adenylyl group from ATP to 4'-phosphopantetheine, yielding dephospho-CoA (dPCoA) and pyrophosphate.</text>
</comment>
<comment type="catalytic activity">
    <reaction evidence="1">
        <text>(R)-4'-phosphopantetheine + ATP + H(+) = 3'-dephospho-CoA + diphosphate</text>
        <dbReference type="Rhea" id="RHEA:19801"/>
        <dbReference type="ChEBI" id="CHEBI:15378"/>
        <dbReference type="ChEBI" id="CHEBI:30616"/>
        <dbReference type="ChEBI" id="CHEBI:33019"/>
        <dbReference type="ChEBI" id="CHEBI:57328"/>
        <dbReference type="ChEBI" id="CHEBI:61723"/>
        <dbReference type="EC" id="2.7.7.3"/>
    </reaction>
</comment>
<comment type="cofactor">
    <cofactor evidence="1">
        <name>Mg(2+)</name>
        <dbReference type="ChEBI" id="CHEBI:18420"/>
    </cofactor>
</comment>
<comment type="pathway">
    <text evidence="1">Cofactor biosynthesis; coenzyme A biosynthesis; CoA from (R)-pantothenate: step 4/5.</text>
</comment>
<comment type="subunit">
    <text evidence="1">Homohexamer.</text>
</comment>
<comment type="subcellular location">
    <subcellularLocation>
        <location evidence="1">Cytoplasm</location>
    </subcellularLocation>
</comment>
<comment type="similarity">
    <text evidence="1">Belongs to the bacterial CoaD family.</text>
</comment>
<keyword id="KW-0067">ATP-binding</keyword>
<keyword id="KW-0173">Coenzyme A biosynthesis</keyword>
<keyword id="KW-0963">Cytoplasm</keyword>
<keyword id="KW-0460">Magnesium</keyword>
<keyword id="KW-0547">Nucleotide-binding</keyword>
<keyword id="KW-0548">Nucleotidyltransferase</keyword>
<keyword id="KW-0808">Transferase</keyword>
<gene>
    <name evidence="1" type="primary">coaD</name>
    <name type="ordered locus">Tcr_1930</name>
</gene>
<accession>Q31EA3</accession>
<proteinExistence type="inferred from homology"/>
<evidence type="ECO:0000255" key="1">
    <source>
        <dbReference type="HAMAP-Rule" id="MF_00151"/>
    </source>
</evidence>
<reference key="1">
    <citation type="journal article" date="2006" name="PLoS Biol.">
        <title>The genome of deep-sea vent chemolithoautotroph Thiomicrospira crunogena XCL-2.</title>
        <authorList>
            <person name="Scott K.M."/>
            <person name="Sievert S.M."/>
            <person name="Abril F.N."/>
            <person name="Ball L.A."/>
            <person name="Barrett C.J."/>
            <person name="Blake R.A."/>
            <person name="Boller A.J."/>
            <person name="Chain P.S.G."/>
            <person name="Clark J.A."/>
            <person name="Davis C.R."/>
            <person name="Detter C."/>
            <person name="Do K.F."/>
            <person name="Dobrinski K.P."/>
            <person name="Faza B.I."/>
            <person name="Fitzpatrick K.A."/>
            <person name="Freyermuth S.K."/>
            <person name="Harmer T.L."/>
            <person name="Hauser L.J."/>
            <person name="Huegler M."/>
            <person name="Kerfeld C.A."/>
            <person name="Klotz M.G."/>
            <person name="Kong W.W."/>
            <person name="Land M."/>
            <person name="Lapidus A."/>
            <person name="Larimer F.W."/>
            <person name="Longo D.L."/>
            <person name="Lucas S."/>
            <person name="Malfatti S.A."/>
            <person name="Massey S.E."/>
            <person name="Martin D.D."/>
            <person name="McCuddin Z."/>
            <person name="Meyer F."/>
            <person name="Moore J.L."/>
            <person name="Ocampo L.H. Jr."/>
            <person name="Paul J.H."/>
            <person name="Paulsen I.T."/>
            <person name="Reep D.K."/>
            <person name="Ren Q."/>
            <person name="Ross R.L."/>
            <person name="Sato P.Y."/>
            <person name="Thomas P."/>
            <person name="Tinkham L.E."/>
            <person name="Zeruth G.T."/>
        </authorList>
    </citation>
    <scope>NUCLEOTIDE SEQUENCE [LARGE SCALE GENOMIC DNA]</scope>
    <source>
        <strain>DSM 25203 / XCL-2</strain>
    </source>
</reference>
<dbReference type="EC" id="2.7.7.3" evidence="1"/>
<dbReference type="EMBL" id="CP000109">
    <property type="protein sequence ID" value="ABB42520.1"/>
    <property type="molecule type" value="Genomic_DNA"/>
</dbReference>
<dbReference type="SMR" id="Q31EA3"/>
<dbReference type="STRING" id="317025.Tcr_1930"/>
<dbReference type="KEGG" id="tcx:Tcr_1930"/>
<dbReference type="eggNOG" id="COG0669">
    <property type="taxonomic scope" value="Bacteria"/>
</dbReference>
<dbReference type="HOGENOM" id="CLU_100149_0_1_6"/>
<dbReference type="OrthoDB" id="9806661at2"/>
<dbReference type="UniPathway" id="UPA00241">
    <property type="reaction ID" value="UER00355"/>
</dbReference>
<dbReference type="GO" id="GO:0005737">
    <property type="term" value="C:cytoplasm"/>
    <property type="evidence" value="ECO:0007669"/>
    <property type="project" value="UniProtKB-SubCell"/>
</dbReference>
<dbReference type="GO" id="GO:0005524">
    <property type="term" value="F:ATP binding"/>
    <property type="evidence" value="ECO:0007669"/>
    <property type="project" value="UniProtKB-KW"/>
</dbReference>
<dbReference type="GO" id="GO:0004595">
    <property type="term" value="F:pantetheine-phosphate adenylyltransferase activity"/>
    <property type="evidence" value="ECO:0007669"/>
    <property type="project" value="UniProtKB-UniRule"/>
</dbReference>
<dbReference type="GO" id="GO:0015937">
    <property type="term" value="P:coenzyme A biosynthetic process"/>
    <property type="evidence" value="ECO:0007669"/>
    <property type="project" value="UniProtKB-UniRule"/>
</dbReference>
<dbReference type="CDD" id="cd02163">
    <property type="entry name" value="PPAT"/>
    <property type="match status" value="1"/>
</dbReference>
<dbReference type="Gene3D" id="3.40.50.620">
    <property type="entry name" value="HUPs"/>
    <property type="match status" value="1"/>
</dbReference>
<dbReference type="HAMAP" id="MF_00151">
    <property type="entry name" value="PPAT_bact"/>
    <property type="match status" value="1"/>
</dbReference>
<dbReference type="InterPro" id="IPR004821">
    <property type="entry name" value="Cyt_trans-like"/>
</dbReference>
<dbReference type="InterPro" id="IPR001980">
    <property type="entry name" value="PPAT"/>
</dbReference>
<dbReference type="InterPro" id="IPR014729">
    <property type="entry name" value="Rossmann-like_a/b/a_fold"/>
</dbReference>
<dbReference type="NCBIfam" id="TIGR01510">
    <property type="entry name" value="coaD_prev_kdtB"/>
    <property type="match status" value="1"/>
</dbReference>
<dbReference type="NCBIfam" id="TIGR00125">
    <property type="entry name" value="cyt_tran_rel"/>
    <property type="match status" value="1"/>
</dbReference>
<dbReference type="PANTHER" id="PTHR21342">
    <property type="entry name" value="PHOSPHOPANTETHEINE ADENYLYLTRANSFERASE"/>
    <property type="match status" value="1"/>
</dbReference>
<dbReference type="PANTHER" id="PTHR21342:SF1">
    <property type="entry name" value="PHOSPHOPANTETHEINE ADENYLYLTRANSFERASE"/>
    <property type="match status" value="1"/>
</dbReference>
<dbReference type="Pfam" id="PF01467">
    <property type="entry name" value="CTP_transf_like"/>
    <property type="match status" value="1"/>
</dbReference>
<dbReference type="PRINTS" id="PR01020">
    <property type="entry name" value="LPSBIOSNTHSS"/>
</dbReference>
<dbReference type="SUPFAM" id="SSF52374">
    <property type="entry name" value="Nucleotidylyl transferase"/>
    <property type="match status" value="1"/>
</dbReference>
<protein>
    <recommendedName>
        <fullName evidence="1">Phosphopantetheine adenylyltransferase</fullName>
        <ecNumber evidence="1">2.7.7.3</ecNumber>
    </recommendedName>
    <alternativeName>
        <fullName evidence="1">Dephospho-CoA pyrophosphorylase</fullName>
    </alternativeName>
    <alternativeName>
        <fullName evidence="1">Pantetheine-phosphate adenylyltransferase</fullName>
        <shortName evidence="1">PPAT</shortName>
    </alternativeName>
</protein>
<name>COAD_HYDCU</name>
<feature type="chain" id="PRO_1000096855" description="Phosphopantetheine adenylyltransferase">
    <location>
        <begin position="1"/>
        <end position="159"/>
    </location>
</feature>
<feature type="binding site" evidence="1">
    <location>
        <begin position="10"/>
        <end position="11"/>
    </location>
    <ligand>
        <name>ATP</name>
        <dbReference type="ChEBI" id="CHEBI:30616"/>
    </ligand>
</feature>
<feature type="binding site" evidence="1">
    <location>
        <position position="10"/>
    </location>
    <ligand>
        <name>substrate</name>
    </ligand>
</feature>
<feature type="binding site" evidence="1">
    <location>
        <position position="18"/>
    </location>
    <ligand>
        <name>ATP</name>
        <dbReference type="ChEBI" id="CHEBI:30616"/>
    </ligand>
</feature>
<feature type="binding site" evidence="1">
    <location>
        <position position="42"/>
    </location>
    <ligand>
        <name>substrate</name>
    </ligand>
</feature>
<feature type="binding site" evidence="1">
    <location>
        <position position="74"/>
    </location>
    <ligand>
        <name>substrate</name>
    </ligand>
</feature>
<feature type="binding site" evidence="1">
    <location>
        <position position="88"/>
    </location>
    <ligand>
        <name>substrate</name>
    </ligand>
</feature>
<feature type="binding site" evidence="1">
    <location>
        <begin position="89"/>
        <end position="91"/>
    </location>
    <ligand>
        <name>ATP</name>
        <dbReference type="ChEBI" id="CHEBI:30616"/>
    </ligand>
</feature>
<feature type="binding site" evidence="1">
    <location>
        <position position="99"/>
    </location>
    <ligand>
        <name>ATP</name>
        <dbReference type="ChEBI" id="CHEBI:30616"/>
    </ligand>
</feature>
<feature type="binding site" evidence="1">
    <location>
        <begin position="124"/>
        <end position="130"/>
    </location>
    <ligand>
        <name>ATP</name>
        <dbReference type="ChEBI" id="CHEBI:30616"/>
    </ligand>
</feature>
<feature type="site" description="Transition state stabilizer" evidence="1">
    <location>
        <position position="18"/>
    </location>
</feature>